<evidence type="ECO:0000255" key="1">
    <source>
        <dbReference type="HAMAP-Rule" id="MF_00228"/>
    </source>
</evidence>
<name>THIM_HELPS</name>
<proteinExistence type="inferred from homology"/>
<feature type="chain" id="PRO_0000383866" description="Hydroxyethylthiazole kinase">
    <location>
        <begin position="1"/>
        <end position="259"/>
    </location>
</feature>
<feature type="binding site" evidence="1">
    <location>
        <position position="37"/>
    </location>
    <ligand>
        <name>substrate</name>
    </ligand>
</feature>
<feature type="binding site" evidence="1">
    <location>
        <position position="113"/>
    </location>
    <ligand>
        <name>ATP</name>
        <dbReference type="ChEBI" id="CHEBI:30616"/>
    </ligand>
</feature>
<feature type="binding site" evidence="1">
    <location>
        <position position="158"/>
    </location>
    <ligand>
        <name>ATP</name>
        <dbReference type="ChEBI" id="CHEBI:30616"/>
    </ligand>
</feature>
<feature type="binding site" evidence="1">
    <location>
        <position position="185"/>
    </location>
    <ligand>
        <name>substrate</name>
    </ligand>
</feature>
<comment type="function">
    <text evidence="1">Catalyzes the phosphorylation of the hydroxyl group of 4-methyl-5-beta-hydroxyethylthiazole (THZ).</text>
</comment>
<comment type="catalytic activity">
    <reaction evidence="1">
        <text>5-(2-hydroxyethyl)-4-methylthiazole + ATP = 4-methyl-5-(2-phosphooxyethyl)-thiazole + ADP + H(+)</text>
        <dbReference type="Rhea" id="RHEA:24212"/>
        <dbReference type="ChEBI" id="CHEBI:15378"/>
        <dbReference type="ChEBI" id="CHEBI:17957"/>
        <dbReference type="ChEBI" id="CHEBI:30616"/>
        <dbReference type="ChEBI" id="CHEBI:58296"/>
        <dbReference type="ChEBI" id="CHEBI:456216"/>
        <dbReference type="EC" id="2.7.1.50"/>
    </reaction>
</comment>
<comment type="cofactor">
    <cofactor evidence="1">
        <name>Mg(2+)</name>
        <dbReference type="ChEBI" id="CHEBI:18420"/>
    </cofactor>
</comment>
<comment type="pathway">
    <text evidence="1">Cofactor biosynthesis; thiamine diphosphate biosynthesis; 4-methyl-5-(2-phosphoethyl)-thiazole from 5-(2-hydroxyethyl)-4-methylthiazole: step 1/1.</text>
</comment>
<comment type="similarity">
    <text evidence="1">Belongs to the Thz kinase family.</text>
</comment>
<organism>
    <name type="scientific">Helicobacter pylori (strain Shi470)</name>
    <dbReference type="NCBI Taxonomy" id="512562"/>
    <lineage>
        <taxon>Bacteria</taxon>
        <taxon>Pseudomonadati</taxon>
        <taxon>Campylobacterota</taxon>
        <taxon>Epsilonproteobacteria</taxon>
        <taxon>Campylobacterales</taxon>
        <taxon>Helicobacteraceae</taxon>
        <taxon>Helicobacter</taxon>
    </lineage>
</organism>
<reference key="1">
    <citation type="submission" date="2008-05" db="EMBL/GenBank/DDBJ databases">
        <title>Genome sequence of Helicobacter pylori from the remote Amazon: traces of Asian ancestry of the first Americans.</title>
        <authorList>
            <person name="Kersulyte D."/>
            <person name="Kalia A."/>
            <person name="Gilman R.H."/>
            <person name="Berg D.E."/>
        </authorList>
    </citation>
    <scope>NUCLEOTIDE SEQUENCE [LARGE SCALE GENOMIC DNA]</scope>
    <source>
        <strain>Shi470</strain>
    </source>
</reference>
<keyword id="KW-0067">ATP-binding</keyword>
<keyword id="KW-0418">Kinase</keyword>
<keyword id="KW-0460">Magnesium</keyword>
<keyword id="KW-0479">Metal-binding</keyword>
<keyword id="KW-0547">Nucleotide-binding</keyword>
<keyword id="KW-0784">Thiamine biosynthesis</keyword>
<keyword id="KW-0808">Transferase</keyword>
<accession>B2USY3</accession>
<gene>
    <name evidence="1" type="primary">thiM</name>
    <name type="ordered locus">HPSH_02575</name>
</gene>
<protein>
    <recommendedName>
        <fullName evidence="1">Hydroxyethylthiazole kinase</fullName>
        <ecNumber evidence="1">2.7.1.50</ecNumber>
    </recommendedName>
    <alternativeName>
        <fullName evidence="1">4-methyl-5-beta-hydroxyethylthiazole kinase</fullName>
        <shortName evidence="1">TH kinase</shortName>
        <shortName evidence="1">Thz kinase</shortName>
    </alternativeName>
</protein>
<dbReference type="EC" id="2.7.1.50" evidence="1"/>
<dbReference type="EMBL" id="CP001072">
    <property type="protein sequence ID" value="ACD47965.1"/>
    <property type="molecule type" value="Genomic_DNA"/>
</dbReference>
<dbReference type="RefSeq" id="WP_000910638.1">
    <property type="nucleotide sequence ID" value="NC_010698.2"/>
</dbReference>
<dbReference type="SMR" id="B2USY3"/>
<dbReference type="KEGG" id="hps:HPSH_02575"/>
<dbReference type="HOGENOM" id="CLU_019943_0_1_7"/>
<dbReference type="UniPathway" id="UPA00060">
    <property type="reaction ID" value="UER00139"/>
</dbReference>
<dbReference type="GO" id="GO:0005524">
    <property type="term" value="F:ATP binding"/>
    <property type="evidence" value="ECO:0007669"/>
    <property type="project" value="UniProtKB-UniRule"/>
</dbReference>
<dbReference type="GO" id="GO:0004417">
    <property type="term" value="F:hydroxyethylthiazole kinase activity"/>
    <property type="evidence" value="ECO:0007669"/>
    <property type="project" value="UniProtKB-UniRule"/>
</dbReference>
<dbReference type="GO" id="GO:0000287">
    <property type="term" value="F:magnesium ion binding"/>
    <property type="evidence" value="ECO:0007669"/>
    <property type="project" value="UniProtKB-UniRule"/>
</dbReference>
<dbReference type="GO" id="GO:0009228">
    <property type="term" value="P:thiamine biosynthetic process"/>
    <property type="evidence" value="ECO:0007669"/>
    <property type="project" value="UniProtKB-KW"/>
</dbReference>
<dbReference type="GO" id="GO:0009229">
    <property type="term" value="P:thiamine diphosphate biosynthetic process"/>
    <property type="evidence" value="ECO:0007669"/>
    <property type="project" value="UniProtKB-UniRule"/>
</dbReference>
<dbReference type="CDD" id="cd01170">
    <property type="entry name" value="THZ_kinase"/>
    <property type="match status" value="1"/>
</dbReference>
<dbReference type="Gene3D" id="3.40.1190.20">
    <property type="match status" value="1"/>
</dbReference>
<dbReference type="HAMAP" id="MF_00228">
    <property type="entry name" value="Thz_kinase"/>
    <property type="match status" value="1"/>
</dbReference>
<dbReference type="InterPro" id="IPR000417">
    <property type="entry name" value="Hyethyz_kinase"/>
</dbReference>
<dbReference type="InterPro" id="IPR029056">
    <property type="entry name" value="Ribokinase-like"/>
</dbReference>
<dbReference type="NCBIfam" id="NF006830">
    <property type="entry name" value="PRK09355.1"/>
    <property type="match status" value="1"/>
</dbReference>
<dbReference type="NCBIfam" id="TIGR00694">
    <property type="entry name" value="thiM"/>
    <property type="match status" value="1"/>
</dbReference>
<dbReference type="Pfam" id="PF02110">
    <property type="entry name" value="HK"/>
    <property type="match status" value="1"/>
</dbReference>
<dbReference type="PIRSF" id="PIRSF000513">
    <property type="entry name" value="Thz_kinase"/>
    <property type="match status" value="1"/>
</dbReference>
<dbReference type="PRINTS" id="PR01099">
    <property type="entry name" value="HYETHTZKNASE"/>
</dbReference>
<dbReference type="SUPFAM" id="SSF53613">
    <property type="entry name" value="Ribokinase-like"/>
    <property type="match status" value="1"/>
</dbReference>
<sequence>MLKELRQKRPLVHNITNYVVAQFVANGLLALGASPLMSDAIAEMQDLAKISDALAINIGTLNERTILCAKEAIKHYKALNKPIVLDPVGCSASALRHGTSLELLESEGISVLRGNAAELGSLVGISCGSKGLDSHYATTPIEIVKLVAQKYSVIAVMTGKTDYVSDGKKVFSITGGSEYLALITGAGCLHAAACASFLSLRKDPLDSMAQLCALYKQAAFNAQKKVSENNGSNGSFLFYFLDALSLPIKLENSLIKEEL</sequence>